<evidence type="ECO:0000255" key="1">
    <source>
        <dbReference type="HAMAP-Rule" id="MF_00494"/>
    </source>
</evidence>
<organism>
    <name type="scientific">Bacillus thuringiensis subsp. konkukian (strain 97-27)</name>
    <dbReference type="NCBI Taxonomy" id="281309"/>
    <lineage>
        <taxon>Bacteria</taxon>
        <taxon>Bacillati</taxon>
        <taxon>Bacillota</taxon>
        <taxon>Bacilli</taxon>
        <taxon>Bacillales</taxon>
        <taxon>Bacillaceae</taxon>
        <taxon>Bacillus</taxon>
        <taxon>Bacillus cereus group</taxon>
    </lineage>
</organism>
<proteinExistence type="inferred from homology"/>
<sequence>MKFFIDTANINEIKEANALGVLAGVTTNPSLVAKEGVDFHERIREICNVVEGPVSAEVISLEADKMIEEGKELAKIAPNVVVKVPMTTEGLKAVKAFSDLGIRTNVTLVFSAVQALLAARAGATYVSPFLGRLDDIGHNGMDLIRQIAEIFAIHGIETEIIAASVRHSVHVTDAALNGAHIATIPANVIASLVKHPLTDQGIEKFLADWEKTQEK</sequence>
<protein>
    <recommendedName>
        <fullName evidence="1">Probable transaldolase</fullName>
        <ecNumber evidence="1">2.2.1.2</ecNumber>
    </recommendedName>
</protein>
<feature type="chain" id="PRO_1000072430" description="Probable transaldolase">
    <location>
        <begin position="1"/>
        <end position="215"/>
    </location>
</feature>
<feature type="active site" description="Schiff-base intermediate with substrate" evidence="1">
    <location>
        <position position="83"/>
    </location>
</feature>
<keyword id="KW-0963">Cytoplasm</keyword>
<keyword id="KW-0570">Pentose shunt</keyword>
<keyword id="KW-0704">Schiff base</keyword>
<keyword id="KW-0808">Transferase</keyword>
<accession>Q6HNE4</accession>
<dbReference type="EC" id="2.2.1.2" evidence="1"/>
<dbReference type="EMBL" id="AE017355">
    <property type="protein sequence ID" value="AAT62439.1"/>
    <property type="molecule type" value="Genomic_DNA"/>
</dbReference>
<dbReference type="RefSeq" id="YP_034927.1">
    <property type="nucleotide sequence ID" value="NC_005957.1"/>
</dbReference>
<dbReference type="SMR" id="Q6HNE4"/>
<dbReference type="KEGG" id="btk:BT9727_0581"/>
<dbReference type="PATRIC" id="fig|281309.8.peg.612"/>
<dbReference type="HOGENOM" id="CLU_079764_0_0_9"/>
<dbReference type="UniPathway" id="UPA00115">
    <property type="reaction ID" value="UER00414"/>
</dbReference>
<dbReference type="Proteomes" id="UP000001301">
    <property type="component" value="Chromosome"/>
</dbReference>
<dbReference type="GO" id="GO:0005737">
    <property type="term" value="C:cytoplasm"/>
    <property type="evidence" value="ECO:0007669"/>
    <property type="project" value="UniProtKB-SubCell"/>
</dbReference>
<dbReference type="GO" id="GO:0016832">
    <property type="term" value="F:aldehyde-lyase activity"/>
    <property type="evidence" value="ECO:0007669"/>
    <property type="project" value="InterPro"/>
</dbReference>
<dbReference type="GO" id="GO:0004801">
    <property type="term" value="F:transaldolase activity"/>
    <property type="evidence" value="ECO:0007669"/>
    <property type="project" value="UniProtKB-UniRule"/>
</dbReference>
<dbReference type="GO" id="GO:0005975">
    <property type="term" value="P:carbohydrate metabolic process"/>
    <property type="evidence" value="ECO:0007669"/>
    <property type="project" value="InterPro"/>
</dbReference>
<dbReference type="GO" id="GO:0006098">
    <property type="term" value="P:pentose-phosphate shunt"/>
    <property type="evidence" value="ECO:0007669"/>
    <property type="project" value="UniProtKB-UniRule"/>
</dbReference>
<dbReference type="CDD" id="cd00956">
    <property type="entry name" value="Transaldolase_FSA"/>
    <property type="match status" value="1"/>
</dbReference>
<dbReference type="FunFam" id="3.20.20.70:FF:000018">
    <property type="entry name" value="Probable transaldolase"/>
    <property type="match status" value="1"/>
</dbReference>
<dbReference type="Gene3D" id="3.20.20.70">
    <property type="entry name" value="Aldolase class I"/>
    <property type="match status" value="1"/>
</dbReference>
<dbReference type="HAMAP" id="MF_00494">
    <property type="entry name" value="Transaldolase_3b"/>
    <property type="match status" value="1"/>
</dbReference>
<dbReference type="InterPro" id="IPR013785">
    <property type="entry name" value="Aldolase_TIM"/>
</dbReference>
<dbReference type="InterPro" id="IPR001585">
    <property type="entry name" value="TAL/FSA"/>
</dbReference>
<dbReference type="InterPro" id="IPR022999">
    <property type="entry name" value="Transaldolase_3B"/>
</dbReference>
<dbReference type="InterPro" id="IPR004731">
    <property type="entry name" value="Transaldolase_3B/F6P_aldolase"/>
</dbReference>
<dbReference type="InterPro" id="IPR018225">
    <property type="entry name" value="Transaldolase_AS"/>
</dbReference>
<dbReference type="InterPro" id="IPR033919">
    <property type="entry name" value="TSA/FSA_arc/bac"/>
</dbReference>
<dbReference type="NCBIfam" id="TIGR00875">
    <property type="entry name" value="fsa_talC_mipB"/>
    <property type="match status" value="1"/>
</dbReference>
<dbReference type="PANTHER" id="PTHR10683">
    <property type="entry name" value="TRANSALDOLASE"/>
    <property type="match status" value="1"/>
</dbReference>
<dbReference type="PANTHER" id="PTHR10683:SF36">
    <property type="entry name" value="TRANSALDOLASE"/>
    <property type="match status" value="1"/>
</dbReference>
<dbReference type="Pfam" id="PF00923">
    <property type="entry name" value="TAL_FSA"/>
    <property type="match status" value="1"/>
</dbReference>
<dbReference type="SUPFAM" id="SSF51569">
    <property type="entry name" value="Aldolase"/>
    <property type="match status" value="1"/>
</dbReference>
<dbReference type="PROSITE" id="PS01054">
    <property type="entry name" value="TRANSALDOLASE_1"/>
    <property type="match status" value="1"/>
</dbReference>
<dbReference type="PROSITE" id="PS00958">
    <property type="entry name" value="TRANSALDOLASE_2"/>
    <property type="match status" value="1"/>
</dbReference>
<reference key="1">
    <citation type="journal article" date="2006" name="J. Bacteriol.">
        <title>Pathogenomic sequence analysis of Bacillus cereus and Bacillus thuringiensis isolates closely related to Bacillus anthracis.</title>
        <authorList>
            <person name="Han C.S."/>
            <person name="Xie G."/>
            <person name="Challacombe J.F."/>
            <person name="Altherr M.R."/>
            <person name="Bhotika S.S."/>
            <person name="Bruce D."/>
            <person name="Campbell C.S."/>
            <person name="Campbell M.L."/>
            <person name="Chen J."/>
            <person name="Chertkov O."/>
            <person name="Cleland C."/>
            <person name="Dimitrijevic M."/>
            <person name="Doggett N.A."/>
            <person name="Fawcett J.J."/>
            <person name="Glavina T."/>
            <person name="Goodwin L.A."/>
            <person name="Hill K.K."/>
            <person name="Hitchcock P."/>
            <person name="Jackson P.J."/>
            <person name="Keim P."/>
            <person name="Kewalramani A.R."/>
            <person name="Longmire J."/>
            <person name="Lucas S."/>
            <person name="Malfatti S."/>
            <person name="McMurry K."/>
            <person name="Meincke L.J."/>
            <person name="Misra M."/>
            <person name="Moseman B.L."/>
            <person name="Mundt M."/>
            <person name="Munk A.C."/>
            <person name="Okinaka R.T."/>
            <person name="Parson-Quintana B."/>
            <person name="Reilly L.P."/>
            <person name="Richardson P."/>
            <person name="Robinson D.L."/>
            <person name="Rubin E."/>
            <person name="Saunders E."/>
            <person name="Tapia R."/>
            <person name="Tesmer J.G."/>
            <person name="Thayer N."/>
            <person name="Thompson L.S."/>
            <person name="Tice H."/>
            <person name="Ticknor L.O."/>
            <person name="Wills P.L."/>
            <person name="Brettin T.S."/>
            <person name="Gilna P."/>
        </authorList>
    </citation>
    <scope>NUCLEOTIDE SEQUENCE [LARGE SCALE GENOMIC DNA]</scope>
    <source>
        <strain>97-27</strain>
    </source>
</reference>
<gene>
    <name evidence="1" type="primary">tal</name>
    <name type="ordered locus">BT9727_0581</name>
</gene>
<comment type="function">
    <text evidence="1">Transaldolase is important for the balance of metabolites in the pentose-phosphate pathway.</text>
</comment>
<comment type="catalytic activity">
    <reaction evidence="1">
        <text>D-sedoheptulose 7-phosphate + D-glyceraldehyde 3-phosphate = D-erythrose 4-phosphate + beta-D-fructose 6-phosphate</text>
        <dbReference type="Rhea" id="RHEA:17053"/>
        <dbReference type="ChEBI" id="CHEBI:16897"/>
        <dbReference type="ChEBI" id="CHEBI:57483"/>
        <dbReference type="ChEBI" id="CHEBI:57634"/>
        <dbReference type="ChEBI" id="CHEBI:59776"/>
        <dbReference type="EC" id="2.2.1.2"/>
    </reaction>
</comment>
<comment type="pathway">
    <text evidence="1">Carbohydrate degradation; pentose phosphate pathway; D-glyceraldehyde 3-phosphate and beta-D-fructose 6-phosphate from D-ribose 5-phosphate and D-xylulose 5-phosphate (non-oxidative stage): step 2/3.</text>
</comment>
<comment type="subcellular location">
    <subcellularLocation>
        <location evidence="1">Cytoplasm</location>
    </subcellularLocation>
</comment>
<comment type="similarity">
    <text evidence="1">Belongs to the transaldolase family. Type 3B subfamily.</text>
</comment>
<name>TAL_BACHK</name>